<accession>A6Q687</accession>
<evidence type="ECO:0000255" key="1">
    <source>
        <dbReference type="HAMAP-Rule" id="MF_01208"/>
    </source>
</evidence>
<feature type="chain" id="PRO_1000138836" description="Orotate phosphoribosyltransferase">
    <location>
        <begin position="1"/>
        <end position="201"/>
    </location>
</feature>
<feature type="binding site" evidence="1">
    <location>
        <position position="90"/>
    </location>
    <ligand>
        <name>5-phospho-alpha-D-ribose 1-diphosphate</name>
        <dbReference type="ChEBI" id="CHEBI:58017"/>
    </ligand>
</feature>
<feature type="binding site" evidence="1">
    <location>
        <begin position="113"/>
        <end position="121"/>
    </location>
    <ligand>
        <name>5-phospho-alpha-D-ribose 1-diphosphate</name>
        <dbReference type="ChEBI" id="CHEBI:58017"/>
    </ligand>
</feature>
<feature type="binding site" evidence="1">
    <location>
        <position position="117"/>
    </location>
    <ligand>
        <name>orotate</name>
        <dbReference type="ChEBI" id="CHEBI:30839"/>
    </ligand>
</feature>
<feature type="binding site" evidence="1">
    <location>
        <position position="145"/>
    </location>
    <ligand>
        <name>orotate</name>
        <dbReference type="ChEBI" id="CHEBI:30839"/>
    </ligand>
</feature>
<comment type="function">
    <text evidence="1">Catalyzes the transfer of a ribosyl phosphate group from 5-phosphoribose 1-diphosphate to orotate, leading to the formation of orotidine monophosphate (OMP).</text>
</comment>
<comment type="catalytic activity">
    <reaction evidence="1">
        <text>orotidine 5'-phosphate + diphosphate = orotate + 5-phospho-alpha-D-ribose 1-diphosphate</text>
        <dbReference type="Rhea" id="RHEA:10380"/>
        <dbReference type="ChEBI" id="CHEBI:30839"/>
        <dbReference type="ChEBI" id="CHEBI:33019"/>
        <dbReference type="ChEBI" id="CHEBI:57538"/>
        <dbReference type="ChEBI" id="CHEBI:58017"/>
        <dbReference type="EC" id="2.4.2.10"/>
    </reaction>
</comment>
<comment type="cofactor">
    <cofactor evidence="1">
        <name>Mg(2+)</name>
        <dbReference type="ChEBI" id="CHEBI:18420"/>
    </cofactor>
</comment>
<comment type="pathway">
    <text evidence="1">Pyrimidine metabolism; UMP biosynthesis via de novo pathway; UMP from orotate: step 1/2.</text>
</comment>
<comment type="subunit">
    <text evidence="1">Homodimer.</text>
</comment>
<comment type="similarity">
    <text evidence="1">Belongs to the purine/pyrimidine phosphoribosyltransferase family. PyrE subfamily.</text>
</comment>
<dbReference type="EC" id="2.4.2.10" evidence="1"/>
<dbReference type="EMBL" id="AP009179">
    <property type="protein sequence ID" value="BAF70996.1"/>
    <property type="molecule type" value="Genomic_DNA"/>
</dbReference>
<dbReference type="RefSeq" id="WP_011979729.1">
    <property type="nucleotide sequence ID" value="NC_009663.1"/>
</dbReference>
<dbReference type="SMR" id="A6Q687"/>
<dbReference type="STRING" id="387093.SUN_0035"/>
<dbReference type="KEGG" id="sun:SUN_0035"/>
<dbReference type="eggNOG" id="COG0461">
    <property type="taxonomic scope" value="Bacteria"/>
</dbReference>
<dbReference type="HOGENOM" id="CLU_074878_3_0_7"/>
<dbReference type="OrthoDB" id="9783570at2"/>
<dbReference type="UniPathway" id="UPA00070">
    <property type="reaction ID" value="UER00119"/>
</dbReference>
<dbReference type="Proteomes" id="UP000006378">
    <property type="component" value="Chromosome"/>
</dbReference>
<dbReference type="GO" id="GO:0000287">
    <property type="term" value="F:magnesium ion binding"/>
    <property type="evidence" value="ECO:0007669"/>
    <property type="project" value="UniProtKB-UniRule"/>
</dbReference>
<dbReference type="GO" id="GO:0004588">
    <property type="term" value="F:orotate phosphoribosyltransferase activity"/>
    <property type="evidence" value="ECO:0007669"/>
    <property type="project" value="UniProtKB-UniRule"/>
</dbReference>
<dbReference type="GO" id="GO:0044205">
    <property type="term" value="P:'de novo' UMP biosynthetic process"/>
    <property type="evidence" value="ECO:0007669"/>
    <property type="project" value="UniProtKB-UniRule"/>
</dbReference>
<dbReference type="GO" id="GO:0019856">
    <property type="term" value="P:pyrimidine nucleobase biosynthetic process"/>
    <property type="evidence" value="ECO:0007669"/>
    <property type="project" value="InterPro"/>
</dbReference>
<dbReference type="CDD" id="cd06223">
    <property type="entry name" value="PRTases_typeI"/>
    <property type="match status" value="1"/>
</dbReference>
<dbReference type="Gene3D" id="3.40.50.2020">
    <property type="match status" value="1"/>
</dbReference>
<dbReference type="HAMAP" id="MF_01208">
    <property type="entry name" value="PyrE"/>
    <property type="match status" value="1"/>
</dbReference>
<dbReference type="InterPro" id="IPR023031">
    <property type="entry name" value="OPRT"/>
</dbReference>
<dbReference type="InterPro" id="IPR006273">
    <property type="entry name" value="Orotate_PRibTrfase_bac"/>
</dbReference>
<dbReference type="InterPro" id="IPR000836">
    <property type="entry name" value="PRibTrfase_dom"/>
</dbReference>
<dbReference type="InterPro" id="IPR029057">
    <property type="entry name" value="PRTase-like"/>
</dbReference>
<dbReference type="NCBIfam" id="TIGR01367">
    <property type="entry name" value="pyrE_Therm"/>
    <property type="match status" value="1"/>
</dbReference>
<dbReference type="PANTHER" id="PTHR19278">
    <property type="entry name" value="OROTATE PHOSPHORIBOSYLTRANSFERASE"/>
    <property type="match status" value="1"/>
</dbReference>
<dbReference type="PANTHER" id="PTHR19278:SF9">
    <property type="entry name" value="URIDINE 5'-MONOPHOSPHATE SYNTHASE"/>
    <property type="match status" value="1"/>
</dbReference>
<dbReference type="Pfam" id="PF00156">
    <property type="entry name" value="Pribosyltran"/>
    <property type="match status" value="1"/>
</dbReference>
<dbReference type="SUPFAM" id="SSF53271">
    <property type="entry name" value="PRTase-like"/>
    <property type="match status" value="1"/>
</dbReference>
<dbReference type="PROSITE" id="PS00103">
    <property type="entry name" value="PUR_PYR_PR_TRANSFER"/>
    <property type="match status" value="1"/>
</dbReference>
<name>PYRE_SULNB</name>
<organism>
    <name type="scientific">Sulfurovum sp. (strain NBC37-1)</name>
    <dbReference type="NCBI Taxonomy" id="387093"/>
    <lineage>
        <taxon>Bacteria</taxon>
        <taxon>Pseudomonadati</taxon>
        <taxon>Campylobacterota</taxon>
        <taxon>Epsilonproteobacteria</taxon>
        <taxon>Campylobacterales</taxon>
        <taxon>Sulfurovaceae</taxon>
        <taxon>Sulfurovum</taxon>
    </lineage>
</organism>
<reference key="1">
    <citation type="journal article" date="2007" name="Proc. Natl. Acad. Sci. U.S.A.">
        <title>Deep-sea vent epsilon-proteobacterial genomes provide insights into emergence of pathogens.</title>
        <authorList>
            <person name="Nakagawa S."/>
            <person name="Takaki Y."/>
            <person name="Shimamura S."/>
            <person name="Reysenbach A.-L."/>
            <person name="Takai K."/>
            <person name="Horikoshi K."/>
        </authorList>
    </citation>
    <scope>NUCLEOTIDE SEQUENCE [LARGE SCALE GENOMIC DNA]</scope>
    <source>
        <strain>NBC37-1</strain>
    </source>
</reference>
<keyword id="KW-0328">Glycosyltransferase</keyword>
<keyword id="KW-0460">Magnesium</keyword>
<keyword id="KW-0665">Pyrimidine biosynthesis</keyword>
<keyword id="KW-0808">Transferase</keyword>
<proteinExistence type="inferred from homology"/>
<protein>
    <recommendedName>
        <fullName evidence="1">Orotate phosphoribosyltransferase</fullName>
        <shortName evidence="1">OPRT</shortName>
        <shortName evidence="1">OPRTase</shortName>
        <ecNumber evidence="1">2.4.2.10</ecNumber>
    </recommendedName>
</protein>
<sequence length="201" mass="21560">MNVEQVYKDANALLEGHFLLASGNHSSRYLQSAKVLEYPQKASLLTDALAEMIRENGIEVDTVCAPALGGVIAGYELARSLGVRSIFVEKKESGMELRRGFEVSPGEKIIICEDIITTGGSALKAAEAIEALGAKVVAFASLANRGFCKRVGGSNEAKSECKLPKDVPFFALEDFTFEMYTPEECPMCKEGSTAIKPGSKG</sequence>
<gene>
    <name evidence="1" type="primary">pyrE</name>
    <name type="ordered locus">SUN_0035</name>
</gene>